<evidence type="ECO:0000255" key="1">
    <source>
        <dbReference type="HAMAP-Rule" id="MF_00022"/>
    </source>
</evidence>
<accession>Q1Q845</accession>
<dbReference type="EC" id="6.1.1.17" evidence="1"/>
<dbReference type="EMBL" id="CP000323">
    <property type="protein sequence ID" value="ABE76158.1"/>
    <property type="molecule type" value="Genomic_DNA"/>
</dbReference>
<dbReference type="RefSeq" id="WP_011514686.1">
    <property type="nucleotide sequence ID" value="NC_007969.1"/>
</dbReference>
<dbReference type="SMR" id="Q1Q845"/>
<dbReference type="STRING" id="335284.Pcryo_2381"/>
<dbReference type="KEGG" id="pcr:Pcryo_2381"/>
<dbReference type="eggNOG" id="COG0008">
    <property type="taxonomic scope" value="Bacteria"/>
</dbReference>
<dbReference type="HOGENOM" id="CLU_015768_6_3_6"/>
<dbReference type="Proteomes" id="UP000002425">
    <property type="component" value="Chromosome"/>
</dbReference>
<dbReference type="GO" id="GO:0005829">
    <property type="term" value="C:cytosol"/>
    <property type="evidence" value="ECO:0007669"/>
    <property type="project" value="TreeGrafter"/>
</dbReference>
<dbReference type="GO" id="GO:0005524">
    <property type="term" value="F:ATP binding"/>
    <property type="evidence" value="ECO:0007669"/>
    <property type="project" value="UniProtKB-UniRule"/>
</dbReference>
<dbReference type="GO" id="GO:0004818">
    <property type="term" value="F:glutamate-tRNA ligase activity"/>
    <property type="evidence" value="ECO:0007669"/>
    <property type="project" value="UniProtKB-UniRule"/>
</dbReference>
<dbReference type="GO" id="GO:0000049">
    <property type="term" value="F:tRNA binding"/>
    <property type="evidence" value="ECO:0007669"/>
    <property type="project" value="InterPro"/>
</dbReference>
<dbReference type="GO" id="GO:0008270">
    <property type="term" value="F:zinc ion binding"/>
    <property type="evidence" value="ECO:0007669"/>
    <property type="project" value="UniProtKB-UniRule"/>
</dbReference>
<dbReference type="GO" id="GO:0006424">
    <property type="term" value="P:glutamyl-tRNA aminoacylation"/>
    <property type="evidence" value="ECO:0007669"/>
    <property type="project" value="UniProtKB-UniRule"/>
</dbReference>
<dbReference type="CDD" id="cd00808">
    <property type="entry name" value="GluRS_core"/>
    <property type="match status" value="1"/>
</dbReference>
<dbReference type="FunFam" id="3.40.50.620:FF:000045">
    <property type="entry name" value="Glutamate--tRNA ligase, mitochondrial"/>
    <property type="match status" value="1"/>
</dbReference>
<dbReference type="Gene3D" id="1.10.10.350">
    <property type="match status" value="1"/>
</dbReference>
<dbReference type="Gene3D" id="3.40.50.620">
    <property type="entry name" value="HUPs"/>
    <property type="match status" value="1"/>
</dbReference>
<dbReference type="HAMAP" id="MF_00022">
    <property type="entry name" value="Glu_tRNA_synth_type1"/>
    <property type="match status" value="1"/>
</dbReference>
<dbReference type="InterPro" id="IPR045462">
    <property type="entry name" value="aa-tRNA-synth_I_cd-bd"/>
</dbReference>
<dbReference type="InterPro" id="IPR020751">
    <property type="entry name" value="aa-tRNA-synth_I_codon-bd_sub2"/>
</dbReference>
<dbReference type="InterPro" id="IPR001412">
    <property type="entry name" value="aa-tRNA-synth_I_CS"/>
</dbReference>
<dbReference type="InterPro" id="IPR008925">
    <property type="entry name" value="aa_tRNA-synth_I_cd-bd_sf"/>
</dbReference>
<dbReference type="InterPro" id="IPR004527">
    <property type="entry name" value="Glu-tRNA-ligase_bac/mito"/>
</dbReference>
<dbReference type="InterPro" id="IPR000924">
    <property type="entry name" value="Glu/Gln-tRNA-synth"/>
</dbReference>
<dbReference type="InterPro" id="IPR020058">
    <property type="entry name" value="Glu/Gln-tRNA-synth_Ib_cat-dom"/>
</dbReference>
<dbReference type="InterPro" id="IPR049940">
    <property type="entry name" value="GluQ/Sye"/>
</dbReference>
<dbReference type="InterPro" id="IPR033910">
    <property type="entry name" value="GluRS_core"/>
</dbReference>
<dbReference type="InterPro" id="IPR014729">
    <property type="entry name" value="Rossmann-like_a/b/a_fold"/>
</dbReference>
<dbReference type="NCBIfam" id="TIGR00464">
    <property type="entry name" value="gltX_bact"/>
    <property type="match status" value="1"/>
</dbReference>
<dbReference type="PANTHER" id="PTHR43311">
    <property type="entry name" value="GLUTAMATE--TRNA LIGASE"/>
    <property type="match status" value="1"/>
</dbReference>
<dbReference type="PANTHER" id="PTHR43311:SF2">
    <property type="entry name" value="GLUTAMATE--TRNA LIGASE, MITOCHONDRIAL-RELATED"/>
    <property type="match status" value="1"/>
</dbReference>
<dbReference type="Pfam" id="PF19269">
    <property type="entry name" value="Anticodon_2"/>
    <property type="match status" value="1"/>
</dbReference>
<dbReference type="Pfam" id="PF00749">
    <property type="entry name" value="tRNA-synt_1c"/>
    <property type="match status" value="1"/>
</dbReference>
<dbReference type="PRINTS" id="PR00987">
    <property type="entry name" value="TRNASYNTHGLU"/>
</dbReference>
<dbReference type="SUPFAM" id="SSF48163">
    <property type="entry name" value="An anticodon-binding domain of class I aminoacyl-tRNA synthetases"/>
    <property type="match status" value="1"/>
</dbReference>
<dbReference type="SUPFAM" id="SSF52374">
    <property type="entry name" value="Nucleotidylyl transferase"/>
    <property type="match status" value="1"/>
</dbReference>
<dbReference type="PROSITE" id="PS00178">
    <property type="entry name" value="AA_TRNA_LIGASE_I"/>
    <property type="match status" value="1"/>
</dbReference>
<feature type="chain" id="PRO_1000001943" description="Glutamate--tRNA ligase">
    <location>
        <begin position="1"/>
        <end position="509"/>
    </location>
</feature>
<feature type="short sequence motif" description="'HIGH' region" evidence="1">
    <location>
        <begin position="20"/>
        <end position="30"/>
    </location>
</feature>
<feature type="short sequence motif" description="'KMSKS' region" evidence="1">
    <location>
        <begin position="261"/>
        <end position="265"/>
    </location>
</feature>
<feature type="binding site" evidence="1">
    <location>
        <position position="117"/>
    </location>
    <ligand>
        <name>Zn(2+)</name>
        <dbReference type="ChEBI" id="CHEBI:29105"/>
    </ligand>
</feature>
<feature type="binding site" evidence="1">
    <location>
        <position position="119"/>
    </location>
    <ligand>
        <name>Zn(2+)</name>
        <dbReference type="ChEBI" id="CHEBI:29105"/>
    </ligand>
</feature>
<feature type="binding site" evidence="1">
    <location>
        <position position="144"/>
    </location>
    <ligand>
        <name>Zn(2+)</name>
        <dbReference type="ChEBI" id="CHEBI:29105"/>
    </ligand>
</feature>
<feature type="binding site" evidence="1">
    <location>
        <position position="146"/>
    </location>
    <ligand>
        <name>Zn(2+)</name>
        <dbReference type="ChEBI" id="CHEBI:29105"/>
    </ligand>
</feature>
<feature type="binding site" evidence="1">
    <location>
        <position position="264"/>
    </location>
    <ligand>
        <name>ATP</name>
        <dbReference type="ChEBI" id="CHEBI:30616"/>
    </ligand>
</feature>
<name>SYE_PSYCK</name>
<keyword id="KW-0030">Aminoacyl-tRNA synthetase</keyword>
<keyword id="KW-0067">ATP-binding</keyword>
<keyword id="KW-0963">Cytoplasm</keyword>
<keyword id="KW-0436">Ligase</keyword>
<keyword id="KW-0479">Metal-binding</keyword>
<keyword id="KW-0547">Nucleotide-binding</keyword>
<keyword id="KW-0648">Protein biosynthesis</keyword>
<keyword id="KW-0862">Zinc</keyword>
<sequence length="509" mass="57493">MMQPSTSTNSIRPVRTRIAPSPTGFPHVGTAYIALFNLAFAKAHGGEFILRIEDTDQTRSTEQSEKMILDALRWVGLDWAEGPDIGGPHAPYRQSERSDIYKKHAEQLIENDHAFRCFCSSEELDAMRAEQMANGETPRYDGRCAHLAAEKTEQLVAEGKPHVIRMRVPTEGVCQVQDMLRGTVEIPWTQVDMQVLLKTDGMPTYHLANVVDDHLMDISHVMRGEEWLNSAPKHQLLYEYFGWEMPVLCHMPLLRNPDKSKLSKRKNPTSITYYRDAGVLPEALLNYLGRMGYSMPDEAEQFTLEEMIASFDIQRVSLGGPIFDIEKLNWLNSEWLRALTPEELKNKILEWASNSDKLTAIAAAIQPRIELLSDAVNWSGFYFQNLPDINAESFTHKSLTPEQIMDMLQLSLWQLEVLPTWSEENIYATLKGLAAHLDIKMRDFMAPFFIAIAGSTSSTPVMNSMAIIGADMTLTRLRHAVDVLGGLGKKKLKKLEKQAAELPDFLAAE</sequence>
<protein>
    <recommendedName>
        <fullName evidence="1">Glutamate--tRNA ligase</fullName>
        <ecNumber evidence="1">6.1.1.17</ecNumber>
    </recommendedName>
    <alternativeName>
        <fullName evidence="1">Glutamyl-tRNA synthetase</fullName>
        <shortName evidence="1">GluRS</shortName>
    </alternativeName>
</protein>
<gene>
    <name evidence="1" type="primary">gltX</name>
    <name type="ordered locus">Pcryo_2381</name>
</gene>
<reference key="1">
    <citation type="submission" date="2006-03" db="EMBL/GenBank/DDBJ databases">
        <title>Complete sequence of chromosome of Psychrobacter cryohalolentis K5.</title>
        <authorList>
            <consortium name="US DOE Joint Genome Institute"/>
            <person name="Copeland A."/>
            <person name="Lucas S."/>
            <person name="Lapidus A."/>
            <person name="Barry K."/>
            <person name="Detter J.C."/>
            <person name="Glavina T."/>
            <person name="Hammon N."/>
            <person name="Israni S."/>
            <person name="Dalin E."/>
            <person name="Tice H."/>
            <person name="Pitluck S."/>
            <person name="Brettin T."/>
            <person name="Bruce D."/>
            <person name="Han C."/>
            <person name="Tapia R."/>
            <person name="Sims D.R."/>
            <person name="Gilna P."/>
            <person name="Schmutz J."/>
            <person name="Larimer F."/>
            <person name="Land M."/>
            <person name="Hauser L."/>
            <person name="Kyrpides N."/>
            <person name="Kim E."/>
            <person name="Richardson P."/>
        </authorList>
    </citation>
    <scope>NUCLEOTIDE SEQUENCE [LARGE SCALE GENOMIC DNA]</scope>
    <source>
        <strain>ATCC BAA-1226 / DSM 17306 / VKM B-2378 / K5</strain>
    </source>
</reference>
<organism>
    <name type="scientific">Psychrobacter cryohalolentis (strain ATCC BAA-1226 / DSM 17306 / VKM B-2378 / K5)</name>
    <dbReference type="NCBI Taxonomy" id="335284"/>
    <lineage>
        <taxon>Bacteria</taxon>
        <taxon>Pseudomonadati</taxon>
        <taxon>Pseudomonadota</taxon>
        <taxon>Gammaproteobacteria</taxon>
        <taxon>Moraxellales</taxon>
        <taxon>Moraxellaceae</taxon>
        <taxon>Psychrobacter</taxon>
    </lineage>
</organism>
<comment type="function">
    <text evidence="1">Catalyzes the attachment of glutamate to tRNA(Glu) in a two-step reaction: glutamate is first activated by ATP to form Glu-AMP and then transferred to the acceptor end of tRNA(Glu).</text>
</comment>
<comment type="catalytic activity">
    <reaction evidence="1">
        <text>tRNA(Glu) + L-glutamate + ATP = L-glutamyl-tRNA(Glu) + AMP + diphosphate</text>
        <dbReference type="Rhea" id="RHEA:23540"/>
        <dbReference type="Rhea" id="RHEA-COMP:9663"/>
        <dbReference type="Rhea" id="RHEA-COMP:9680"/>
        <dbReference type="ChEBI" id="CHEBI:29985"/>
        <dbReference type="ChEBI" id="CHEBI:30616"/>
        <dbReference type="ChEBI" id="CHEBI:33019"/>
        <dbReference type="ChEBI" id="CHEBI:78442"/>
        <dbReference type="ChEBI" id="CHEBI:78520"/>
        <dbReference type="ChEBI" id="CHEBI:456215"/>
        <dbReference type="EC" id="6.1.1.17"/>
    </reaction>
</comment>
<comment type="cofactor">
    <cofactor evidence="1">
        <name>Zn(2+)</name>
        <dbReference type="ChEBI" id="CHEBI:29105"/>
    </cofactor>
    <text evidence="1">Binds 1 zinc ion per subunit.</text>
</comment>
<comment type="subunit">
    <text evidence="1">Monomer.</text>
</comment>
<comment type="subcellular location">
    <subcellularLocation>
        <location evidence="1">Cytoplasm</location>
    </subcellularLocation>
</comment>
<comment type="similarity">
    <text evidence="1">Belongs to the class-I aminoacyl-tRNA synthetase family. Glutamate--tRNA ligase type 1 subfamily.</text>
</comment>
<proteinExistence type="inferred from homology"/>